<keyword id="KW-0002">3D-structure</keyword>
<keyword id="KW-1185">Reference proteome</keyword>
<keyword id="KW-0946">Virion</keyword>
<feature type="chain" id="PRO_0000458032" description="Ring protein 3">
    <location>
        <begin position="1"/>
        <end position="230"/>
    </location>
</feature>
<feature type="helix" evidence="6">
    <location>
        <begin position="3"/>
        <end position="14"/>
    </location>
</feature>
<feature type="turn" evidence="6">
    <location>
        <begin position="15"/>
        <end position="17"/>
    </location>
</feature>
<feature type="strand" evidence="6">
    <location>
        <begin position="19"/>
        <end position="21"/>
    </location>
</feature>
<feature type="helix" evidence="6">
    <location>
        <begin position="27"/>
        <end position="46"/>
    </location>
</feature>
<feature type="turn" evidence="6">
    <location>
        <begin position="51"/>
        <end position="53"/>
    </location>
</feature>
<feature type="helix" evidence="6">
    <location>
        <begin position="61"/>
        <end position="67"/>
    </location>
</feature>
<feature type="helix" evidence="6">
    <location>
        <begin position="68"/>
        <end position="70"/>
    </location>
</feature>
<feature type="strand" evidence="6">
    <location>
        <begin position="71"/>
        <end position="76"/>
    </location>
</feature>
<feature type="strand" evidence="6">
    <location>
        <begin position="90"/>
        <end position="94"/>
    </location>
</feature>
<feature type="strand" evidence="6">
    <location>
        <begin position="97"/>
        <end position="109"/>
    </location>
</feature>
<feature type="strand" evidence="6">
    <location>
        <begin position="112"/>
        <end position="114"/>
    </location>
</feature>
<feature type="strand" evidence="6">
    <location>
        <begin position="121"/>
        <end position="126"/>
    </location>
</feature>
<feature type="turn" evidence="6">
    <location>
        <begin position="130"/>
        <end position="132"/>
    </location>
</feature>
<feature type="helix" evidence="6">
    <location>
        <begin position="133"/>
        <end position="136"/>
    </location>
</feature>
<feature type="turn" evidence="6">
    <location>
        <begin position="139"/>
        <end position="141"/>
    </location>
</feature>
<feature type="strand" evidence="6">
    <location>
        <begin position="142"/>
        <end position="144"/>
    </location>
</feature>
<feature type="strand" evidence="6">
    <location>
        <begin position="147"/>
        <end position="153"/>
    </location>
</feature>
<feature type="turn" evidence="6">
    <location>
        <begin position="154"/>
        <end position="156"/>
    </location>
</feature>
<feature type="strand" evidence="6">
    <location>
        <begin position="157"/>
        <end position="161"/>
    </location>
</feature>
<feature type="strand" evidence="6">
    <location>
        <begin position="166"/>
        <end position="175"/>
    </location>
</feature>
<feature type="helix" evidence="6">
    <location>
        <begin position="204"/>
        <end position="222"/>
    </location>
</feature>
<organismHost>
    <name type="scientific">Bacteroides intestinalis</name>
    <dbReference type="NCBI Taxonomy" id="329854"/>
</organismHost>
<organism>
    <name type="scientific">Bacteroides phage crAss001</name>
    <name type="common">Bacteroides phage PhiCrAss001</name>
    <dbReference type="NCBI Taxonomy" id="2301731"/>
    <lineage>
        <taxon>Viruses</taxon>
        <taxon>Duplodnaviria</taxon>
        <taxon>Heunggongvirae</taxon>
        <taxon>Uroviricota</taxon>
        <taxon>Caudoviricetes</taxon>
        <taxon>Crassvirales</taxon>
        <taxon>Steigviridae</taxon>
        <taxon>Asinivirinae</taxon>
        <taxon>Kehishuvirus</taxon>
        <taxon>Kehishuvirus primarius</taxon>
    </lineage>
</organism>
<proteinExistence type="evidence at protein level"/>
<name>RING3_BPCA1</name>
<comment type="function">
    <text evidence="1">Forms the tail multi-ring barrel with ring protein 1, ring protein 2 and ring protein 4.</text>
</comment>
<comment type="subunit">
    <text evidence="1">Homododecamer.</text>
</comment>
<comment type="subcellular location">
    <subcellularLocation>
        <location evidence="1">Virion</location>
    </subcellularLocation>
    <text evidence="1">Present in 12 copies in the virion tail.</text>
</comment>
<comment type="miscellaneous">
    <text evidence="1 4">The barrel is composed of five stacked dodecameric ring structures (Probable) (PubMed:37138077). Podoviridae-like phages usually possess only one such ring (Probable). The tail is thus rather long (PubMed:37138077).</text>
</comment>
<gene>
    <name evidence="5" type="ORF">crAss001_35</name>
</gene>
<reference key="1">
    <citation type="journal article" date="2018" name="Nat. Commun.">
        <title>PhiCrAss001 represents the most abundant bacteriophage family in the human gut and infects Bacteroides intestinalis.</title>
        <authorList>
            <person name="Shkoporov A.N."/>
            <person name="Khokhlova E.V."/>
            <person name="Fitzgerald C.B."/>
            <person name="Stockdale S.R."/>
            <person name="Draper L.A."/>
            <person name="Ross R.P."/>
            <person name="Hill C."/>
        </authorList>
    </citation>
    <scope>NUCLEOTIDE SEQUENCE [LARGE SCALE GENOMIC DNA]</scope>
</reference>
<reference key="2">
    <citation type="journal article" date="2023" name="Nature">
        <title>Structural atlas of a human gut crassvirus.</title>
        <authorList>
            <person name="Bayfield O.W."/>
            <person name="Shkoporov A.N."/>
            <person name="Yutin N."/>
            <person name="Khokhlova E.V."/>
            <person name="Smith J.L.R."/>
            <person name="Hawkins D.E.D.P."/>
            <person name="Koonin E.V."/>
            <person name="Hill C."/>
            <person name="Antson A.A."/>
        </authorList>
    </citation>
    <scope>SUBCELLULAR LOCATION</scope>
    <scope>INTERACTION WITH RING PROTEIN 2</scope>
    <scope>INTERACTION WITH RING PROTEIN 4</scope>
    <scope>SUBUNIT</scope>
</reference>
<dbReference type="EMBL" id="MH675552">
    <property type="protein sequence ID" value="AXQ62678.1"/>
    <property type="molecule type" value="Genomic_DNA"/>
</dbReference>
<dbReference type="PDB" id="7QOJ">
    <property type="method" value="EM"/>
    <property type="resolution" value="3.21 A"/>
    <property type="chains" value="D=1-230"/>
</dbReference>
<dbReference type="PDB" id="7QOL">
    <property type="method" value="EM"/>
    <property type="resolution" value="3.33 A"/>
    <property type="chains" value="D/T=1-230"/>
</dbReference>
<dbReference type="PDB" id="8CKB">
    <property type="method" value="EM"/>
    <property type="resolution" value="4.39 A"/>
    <property type="chains" value="L001/L002/L003/L004/L005/L006/L007/L008/L009/L010/L012/RP3011=1-230"/>
</dbReference>
<dbReference type="PDBsum" id="7QOJ"/>
<dbReference type="PDBsum" id="7QOL"/>
<dbReference type="PDBsum" id="8CKB"/>
<dbReference type="EMDB" id="EMD-14092"/>
<dbReference type="EMDB" id="EMD-14094"/>
<dbReference type="SMR" id="A0A385DV73"/>
<dbReference type="Proteomes" id="UP000262320">
    <property type="component" value="Genome"/>
</dbReference>
<dbReference type="GO" id="GO:0044423">
    <property type="term" value="C:virion component"/>
    <property type="evidence" value="ECO:0007669"/>
    <property type="project" value="UniProtKB-KW"/>
</dbReference>
<accession>A0A385DV73</accession>
<protein>
    <recommendedName>
        <fullName evidence="3">Ring protein 3</fullName>
        <shortName evidence="3">R3</shortName>
    </recommendedName>
    <alternativeName>
        <fullName evidence="2">Gene product 35</fullName>
        <shortName evidence="2">gp35</shortName>
    </alternativeName>
</protein>
<evidence type="ECO:0000269" key="1">
    <source>
    </source>
</evidence>
<evidence type="ECO:0000303" key="2">
    <source>
    </source>
</evidence>
<evidence type="ECO:0000303" key="3">
    <source>
    </source>
</evidence>
<evidence type="ECO:0000305" key="4">
    <source>
    </source>
</evidence>
<evidence type="ECO:0000312" key="5">
    <source>
        <dbReference type="EMBL" id="AXQ62678.1"/>
    </source>
</evidence>
<evidence type="ECO:0007829" key="6">
    <source>
        <dbReference type="PDB" id="7QOJ"/>
    </source>
</evidence>
<sequence length="230" mass="26051">MTNKEFSDGFSTLLNSFGITPNITLDEYEKSTFLTNAQEQLIIDIYSGRNIIYGKSFEQTEEIRRYLSNLVETYETSTKVTGKLGLSKDSVFFEIPQDTWFITYEVAFLKDSRLGCLDGIEASVVPLPQDDLYRAKDNPFRGPSKDRVLRLDIKSDLAELISKYNVDKYLMRYISQPTPIILVDLPDGLSINGVSTESECELNPVVHRAILERAVQLAIISKTQLTGNKE</sequence>